<evidence type="ECO:0000255" key="1">
    <source>
        <dbReference type="HAMAP-Rule" id="MF_00351"/>
    </source>
</evidence>
<gene>
    <name evidence="1" type="primary">flpA</name>
    <name type="ordered locus">Smar_1255</name>
</gene>
<sequence length="234" mass="26760">MSQVVNIKPHEKYYGVYIVELEDGSVKLATKNLVPGHRVYGERLYRWGGEEYREWNLYRSKLAGALANGLAEQPIREGHSILYLGVATGTTASHISDIVGPTGRIFSVEFAPRVMREFVLVADIRKNLYPILGDARKPKEYRHLVEMVDGIYADIAQPEQAAIVADNADYFLKDNGYLLLAIKARSIDVTKEPSEIYRREINTLKERGFEIIDVVHLEPYDKDHAMVYARYKRK</sequence>
<comment type="function">
    <text evidence="1">Involved in pre-rRNA and tRNA processing. Utilizes the methyl donor S-adenosyl-L-methionine to catalyze the site-specific 2'-hydroxyl methylation of ribose moieties in rRNA and tRNA. Site specificity is provided by a guide RNA that base pairs with the substrate. Methylation occurs at a characteristic distance from the sequence involved in base pairing with the guide RNA.</text>
</comment>
<comment type="subunit">
    <text evidence="1">Interacts with nop5. Component of box C/D small ribonucleoprotein (sRNP) particles that contain rpl7ae, FlpA and nop5, plus a guide RNA.</text>
</comment>
<comment type="similarity">
    <text evidence="1">Belongs to the methyltransferase superfamily. Fibrillarin family.</text>
</comment>
<name>FLPA_STAMF</name>
<protein>
    <recommendedName>
        <fullName evidence="1">Fibrillarin-like rRNA/tRNA 2'-O-methyltransferase</fullName>
        <ecNumber evidence="1">2.1.1.-</ecNumber>
    </recommendedName>
</protein>
<reference key="1">
    <citation type="journal article" date="2009" name="BMC Genomics">
        <title>The complete genome sequence of Staphylothermus marinus reveals differences in sulfur metabolism among heterotrophic Crenarchaeota.</title>
        <authorList>
            <person name="Anderson I.J."/>
            <person name="Dharmarajan L."/>
            <person name="Rodriguez J."/>
            <person name="Hooper S."/>
            <person name="Porat I."/>
            <person name="Ulrich L.E."/>
            <person name="Elkins J.G."/>
            <person name="Mavromatis K."/>
            <person name="Sun H."/>
            <person name="Land M."/>
            <person name="Lapidus A."/>
            <person name="Lucas S."/>
            <person name="Barry K."/>
            <person name="Huber H."/>
            <person name="Zhulin I.B."/>
            <person name="Whitman W.B."/>
            <person name="Mukhopadhyay B."/>
            <person name="Woese C."/>
            <person name="Bristow J."/>
            <person name="Kyrpides N."/>
        </authorList>
    </citation>
    <scope>NUCLEOTIDE SEQUENCE [LARGE SCALE GENOMIC DNA]</scope>
    <source>
        <strain>ATCC 43588 / DSM 3639 / JCM 9404 / F1</strain>
    </source>
</reference>
<reference key="2">
    <citation type="journal article" date="2009" name="Stand. Genomic Sci.">
        <title>Complete genome sequence of Staphylothermus marinus Stetter and Fiala 1986 type strain F1.</title>
        <authorList>
            <person name="Anderson I.J."/>
            <person name="Sun H."/>
            <person name="Lapidus A."/>
            <person name="Copeland A."/>
            <person name="Glavina Del Rio T."/>
            <person name="Tice H."/>
            <person name="Dalin E."/>
            <person name="Lucas S."/>
            <person name="Barry K."/>
            <person name="Land M."/>
            <person name="Richardson P."/>
            <person name="Huber H."/>
            <person name="Kyrpides N.C."/>
        </authorList>
    </citation>
    <scope>NUCLEOTIDE SEQUENCE [LARGE SCALE GENOMIC DNA]</scope>
    <source>
        <strain>ATCC 43588 / DSM 3639 / JCM 9404 / F1</strain>
    </source>
</reference>
<keyword id="KW-0489">Methyltransferase</keyword>
<keyword id="KW-1185">Reference proteome</keyword>
<keyword id="KW-0694">RNA-binding</keyword>
<keyword id="KW-0698">rRNA processing</keyword>
<keyword id="KW-0808">Transferase</keyword>
<keyword id="KW-0819">tRNA processing</keyword>
<organism>
    <name type="scientific">Staphylothermus marinus (strain ATCC 43588 / DSM 3639 / JCM 9404 / F1)</name>
    <dbReference type="NCBI Taxonomy" id="399550"/>
    <lineage>
        <taxon>Archaea</taxon>
        <taxon>Thermoproteota</taxon>
        <taxon>Thermoprotei</taxon>
        <taxon>Desulfurococcales</taxon>
        <taxon>Desulfurococcaceae</taxon>
        <taxon>Staphylothermus</taxon>
    </lineage>
</organism>
<dbReference type="EC" id="2.1.1.-" evidence="1"/>
<dbReference type="EMBL" id="CP000575">
    <property type="protein sequence ID" value="ABN70347.1"/>
    <property type="molecule type" value="Genomic_DNA"/>
</dbReference>
<dbReference type="RefSeq" id="WP_011839538.1">
    <property type="nucleotide sequence ID" value="NC_009033.1"/>
</dbReference>
<dbReference type="SMR" id="A3DNY7"/>
<dbReference type="STRING" id="399550.Smar_1255"/>
<dbReference type="GeneID" id="4907121"/>
<dbReference type="KEGG" id="smr:Smar_1255"/>
<dbReference type="eggNOG" id="arCOG00078">
    <property type="taxonomic scope" value="Archaea"/>
</dbReference>
<dbReference type="HOGENOM" id="CLU_059055_2_0_2"/>
<dbReference type="OrthoDB" id="6244at2157"/>
<dbReference type="Proteomes" id="UP000000254">
    <property type="component" value="Chromosome"/>
</dbReference>
<dbReference type="GO" id="GO:1990259">
    <property type="term" value="F:histone H2AQ104 methyltransferase activity"/>
    <property type="evidence" value="ECO:0007669"/>
    <property type="project" value="TreeGrafter"/>
</dbReference>
<dbReference type="GO" id="GO:0003723">
    <property type="term" value="F:RNA binding"/>
    <property type="evidence" value="ECO:0007669"/>
    <property type="project" value="UniProtKB-UniRule"/>
</dbReference>
<dbReference type="GO" id="GO:0008649">
    <property type="term" value="F:rRNA methyltransferase activity"/>
    <property type="evidence" value="ECO:0007669"/>
    <property type="project" value="TreeGrafter"/>
</dbReference>
<dbReference type="GO" id="GO:0000494">
    <property type="term" value="P:box C/D sno(s)RNA 3'-end processing"/>
    <property type="evidence" value="ECO:0007669"/>
    <property type="project" value="TreeGrafter"/>
</dbReference>
<dbReference type="GO" id="GO:0008033">
    <property type="term" value="P:tRNA processing"/>
    <property type="evidence" value="ECO:0007669"/>
    <property type="project" value="UniProtKB-UniRule"/>
</dbReference>
<dbReference type="FunFam" id="3.30.200.20:FF:000613">
    <property type="entry name" value="Fibrillarin-like rRNA/tRNA 2'-O-methyltransferase"/>
    <property type="match status" value="1"/>
</dbReference>
<dbReference type="Gene3D" id="3.30.200.20">
    <property type="entry name" value="Phosphorylase Kinase, domain 1"/>
    <property type="match status" value="1"/>
</dbReference>
<dbReference type="Gene3D" id="3.40.50.150">
    <property type="entry name" value="Vaccinia Virus protein VP39"/>
    <property type="match status" value="1"/>
</dbReference>
<dbReference type="HAMAP" id="MF_00351">
    <property type="entry name" value="RNA_methyltransf_FlpA"/>
    <property type="match status" value="1"/>
</dbReference>
<dbReference type="InterPro" id="IPR000692">
    <property type="entry name" value="Fibrillarin"/>
</dbReference>
<dbReference type="InterPro" id="IPR020813">
    <property type="entry name" value="Fibrillarin_CS"/>
</dbReference>
<dbReference type="InterPro" id="IPR029063">
    <property type="entry name" value="SAM-dependent_MTases_sf"/>
</dbReference>
<dbReference type="NCBIfam" id="NF003275">
    <property type="entry name" value="PRK04266.1-1"/>
    <property type="match status" value="1"/>
</dbReference>
<dbReference type="NCBIfam" id="NF003276">
    <property type="entry name" value="PRK04266.1-2"/>
    <property type="match status" value="1"/>
</dbReference>
<dbReference type="NCBIfam" id="NF003277">
    <property type="entry name" value="PRK04266.1-3"/>
    <property type="match status" value="1"/>
</dbReference>
<dbReference type="PANTHER" id="PTHR10335:SF17">
    <property type="entry name" value="FIBRILLARIN"/>
    <property type="match status" value="1"/>
</dbReference>
<dbReference type="PANTHER" id="PTHR10335">
    <property type="entry name" value="RRNA 2-O-METHYLTRANSFERASE FIBRILLARIN"/>
    <property type="match status" value="1"/>
</dbReference>
<dbReference type="Pfam" id="PF01269">
    <property type="entry name" value="Fibrillarin"/>
    <property type="match status" value="1"/>
</dbReference>
<dbReference type="PIRSF" id="PIRSF006540">
    <property type="entry name" value="Nop17p"/>
    <property type="match status" value="1"/>
</dbReference>
<dbReference type="PRINTS" id="PR00052">
    <property type="entry name" value="FIBRILLARIN"/>
</dbReference>
<dbReference type="SMART" id="SM01206">
    <property type="entry name" value="Fibrillarin"/>
    <property type="match status" value="1"/>
</dbReference>
<dbReference type="SUPFAM" id="SSF53335">
    <property type="entry name" value="S-adenosyl-L-methionine-dependent methyltransferases"/>
    <property type="match status" value="1"/>
</dbReference>
<dbReference type="PROSITE" id="PS00566">
    <property type="entry name" value="FIBRILLARIN"/>
    <property type="match status" value="1"/>
</dbReference>
<proteinExistence type="inferred from homology"/>
<accession>A3DNY7</accession>
<feature type="chain" id="PRO_1000006945" description="Fibrillarin-like rRNA/tRNA 2'-O-methyltransferase">
    <location>
        <begin position="1"/>
        <end position="234"/>
    </location>
</feature>
<feature type="binding site" evidence="1">
    <location>
        <begin position="90"/>
        <end position="91"/>
    </location>
    <ligand>
        <name>S-adenosyl-L-methionine</name>
        <dbReference type="ChEBI" id="CHEBI:59789"/>
    </ligand>
</feature>
<feature type="binding site" evidence="1">
    <location>
        <begin position="109"/>
        <end position="110"/>
    </location>
    <ligand>
        <name>S-adenosyl-L-methionine</name>
        <dbReference type="ChEBI" id="CHEBI:59789"/>
    </ligand>
</feature>
<feature type="binding site" evidence="1">
    <location>
        <begin position="134"/>
        <end position="135"/>
    </location>
    <ligand>
        <name>S-adenosyl-L-methionine</name>
        <dbReference type="ChEBI" id="CHEBI:59789"/>
    </ligand>
</feature>
<feature type="binding site" evidence="1">
    <location>
        <begin position="154"/>
        <end position="157"/>
    </location>
    <ligand>
        <name>S-adenosyl-L-methionine</name>
        <dbReference type="ChEBI" id="CHEBI:59789"/>
    </ligand>
</feature>